<protein>
    <recommendedName>
        <fullName>Autophagy-related protein 11</fullName>
    </recommendedName>
</protein>
<name>ATG11_EREGS</name>
<reference key="1">
    <citation type="journal article" date="2004" name="Science">
        <title>The Ashbya gossypii genome as a tool for mapping the ancient Saccharomyces cerevisiae genome.</title>
        <authorList>
            <person name="Dietrich F.S."/>
            <person name="Voegeli S."/>
            <person name="Brachat S."/>
            <person name="Lerch A."/>
            <person name="Gates K."/>
            <person name="Steiner S."/>
            <person name="Mohr C."/>
            <person name="Poehlmann R."/>
            <person name="Luedi P."/>
            <person name="Choi S."/>
            <person name="Wing R.A."/>
            <person name="Flavier A."/>
            <person name="Gaffney T.D."/>
            <person name="Philippsen P."/>
        </authorList>
    </citation>
    <scope>NUCLEOTIDE SEQUENCE [LARGE SCALE GENOMIC DNA]</scope>
    <source>
        <strain>ATCC 10895 / CBS 109.51 / FGSC 9923 / NRRL Y-1056</strain>
    </source>
</reference>
<reference key="2">
    <citation type="journal article" date="2013" name="G3 (Bethesda)">
        <title>Genomes of Ashbya fungi isolated from insects reveal four mating-type loci, numerous translocations, lack of transposons, and distinct gene duplications.</title>
        <authorList>
            <person name="Dietrich F.S."/>
            <person name="Voegeli S."/>
            <person name="Kuo S."/>
            <person name="Philippsen P."/>
        </authorList>
    </citation>
    <scope>GENOME REANNOTATION</scope>
    <source>
        <strain>ATCC 10895 / CBS 109.51 / FGSC 9923 / NRRL Y-1056</strain>
    </source>
</reference>
<sequence>MGHVEGNLQLVNAISGRSIGTHVQYFMTMEDLKRFVIQQWHIPGPEIFILQPYGGKFKRGHFQDMVSEAKKAVARGRVRETSVLYVFDRRLFDGGEEALAQATRHDSTTLVRPLVSPLEDAEAEVGERAAASLLTTNLGWLSALEIDVRYFHACIEGWVQQLANMKECLSVLLQYLELYSFDIEKLYHASAEAVDGVRQRCASNDWRQKNQELLETIDAVASRGKLVQFVDLEEMSEAEERLRELERLLSKKLSLFRGALDENHAIRQEIANHIKEVGTRYQDNISNYELEAQILGNFKDMVKKVKEDTRTILDLDTTKVSPDLMTSAVSLFKEMKSTAIPALYTVGLSLFTQASKCMETKASLQREMLVILADIAVAQVNIVDAKNSLLQQVNQDISALHTTEQQLLRVSELPVVYGLYLIELYRRQHWITGLDRYYSEHTKEIQSVLQRELVFREKWSSDFSSYSEIFQWQDDKPQLAKLFSNASPLEVGRPCIDIGTIQTYIEMLARCDVAEDSQTLLKKTLSEVSRFQFIVKSPLAGSVSKDSTDSMNEVIEGYKNRINKLELLLHSTQFSNTSSWPTGVLNSNSLNVFHNNIASINEKLLLSDYKSRDSIMSGKSNEKELQSQLVELQKQLEEAKNEAKRVQQQLKTTKTQLLNGEDERTAYKETLSILNAELSKLILNQEEQKQELVIAAKDFQEKLDVSMRQVNDLLKQVNFWKSKCGDLDKIKQDLLANMATKETDFNNRCTDYERNIVELQRQLSEKCDATNERSVTSTSADVPGETKEYIESLKEVNRRLEEDMFAVFAGNIVLLENIGLLLSRGPDNKLQIIRVKGLRKNIDDSIIKDSSPVINSHMVKSTVFQDVKNLFDELQLSQGVNDQLHFVSELERFYEEDLFQTSVIKRFTDVENLAKKLRKENKAKKSVIERHNKDKITFRDLKVGDLALFLPTRGVAGSLTSSVASSLASSFSSVDLSTPPPPLPTASQSLIKVTPHKPHRNKSTPWAVFTASELGVRYFLKDSEELVKGKDWFVGKIQSMEKYTVNGDSRNPFKLPEGMVWYEVVASCTKEL</sequence>
<comment type="function">
    <text evidence="1">Involved in cytoplasm to vacuole transport (Cvt), pexophagy, mitophagy and nucleophagy. Recruits mitochondria for their selective degradation via autophagy (mitophagy) during starvation. Works as scaffold proteins that recruit ATG proteins to the pre-autophagosome (PAS), the site of vesicle/autophagosome formation. Required for the Cvt vesicles completion (By similarity).</text>
</comment>
<comment type="subunit">
    <text evidence="1">Homodimer.</text>
</comment>
<comment type="subcellular location">
    <subcellularLocation>
        <location evidence="1">Preautophagosomal structure membrane</location>
        <topology evidence="1">Peripheral membrane protein</topology>
    </subcellularLocation>
    <subcellularLocation>
        <location evidence="1">Vacuole membrane</location>
        <topology evidence="1">Peripheral membrane protein</topology>
    </subcellularLocation>
    <text evidence="1">During pexophagy, accumulates in the vacuolar membrane region, where the peroxisomes contact the vacuole.</text>
</comment>
<comment type="similarity">
    <text evidence="3">Belongs to the ATG11 family.</text>
</comment>
<dbReference type="EMBL" id="AE016817">
    <property type="protein sequence ID" value="AAS51613.1"/>
    <property type="molecule type" value="Genomic_DNA"/>
</dbReference>
<dbReference type="RefSeq" id="NP_983789.1">
    <property type="nucleotide sequence ID" value="NM_209142.1"/>
</dbReference>
<dbReference type="SMR" id="Q75B79"/>
<dbReference type="FunCoup" id="Q75B79">
    <property type="interactions" value="182"/>
</dbReference>
<dbReference type="STRING" id="284811.Q75B79"/>
<dbReference type="EnsemblFungi" id="AAS51613">
    <property type="protein sequence ID" value="AAS51613"/>
    <property type="gene ID" value="AGOS_ADL307W"/>
</dbReference>
<dbReference type="GeneID" id="4619924"/>
<dbReference type="KEGG" id="ago:AGOS_ADL307W"/>
<dbReference type="eggNOG" id="ENOG502QVZE">
    <property type="taxonomic scope" value="Eukaryota"/>
</dbReference>
<dbReference type="HOGENOM" id="CLU_272501_0_0_1"/>
<dbReference type="InParanoid" id="Q75B79"/>
<dbReference type="OMA" id="EIDVHYF"/>
<dbReference type="OrthoDB" id="447953at2759"/>
<dbReference type="Proteomes" id="UP000000591">
    <property type="component" value="Chromosome IV"/>
</dbReference>
<dbReference type="GO" id="GO:1990316">
    <property type="term" value="C:Atg1/ULK1 kinase complex"/>
    <property type="evidence" value="ECO:0000318"/>
    <property type="project" value="GO_Central"/>
</dbReference>
<dbReference type="GO" id="GO:0034045">
    <property type="term" value="C:phagophore assembly site membrane"/>
    <property type="evidence" value="ECO:0000318"/>
    <property type="project" value="GO_Central"/>
</dbReference>
<dbReference type="GO" id="GO:0005774">
    <property type="term" value="C:vacuolar membrane"/>
    <property type="evidence" value="ECO:0007669"/>
    <property type="project" value="UniProtKB-SubCell"/>
</dbReference>
<dbReference type="GO" id="GO:0060090">
    <property type="term" value="F:molecular adaptor activity"/>
    <property type="evidence" value="ECO:0000318"/>
    <property type="project" value="GO_Central"/>
</dbReference>
<dbReference type="GO" id="GO:0019901">
    <property type="term" value="F:protein kinase binding"/>
    <property type="evidence" value="ECO:0000318"/>
    <property type="project" value="GO_Central"/>
</dbReference>
<dbReference type="GO" id="GO:0000149">
    <property type="term" value="F:SNARE binding"/>
    <property type="evidence" value="ECO:0007669"/>
    <property type="project" value="EnsemblFungi"/>
</dbReference>
<dbReference type="GO" id="GO:0000045">
    <property type="term" value="P:autophagosome assembly"/>
    <property type="evidence" value="ECO:0000318"/>
    <property type="project" value="GO_Central"/>
</dbReference>
<dbReference type="GO" id="GO:0000422">
    <property type="term" value="P:autophagy of mitochondrion"/>
    <property type="evidence" value="ECO:0000318"/>
    <property type="project" value="GO_Central"/>
</dbReference>
<dbReference type="GO" id="GO:0006995">
    <property type="term" value="P:cellular response to nitrogen starvation"/>
    <property type="evidence" value="ECO:0007669"/>
    <property type="project" value="EnsemblFungi"/>
</dbReference>
<dbReference type="GO" id="GO:0032258">
    <property type="term" value="P:cytoplasm to vacuole targeting by the Cvt pathway"/>
    <property type="evidence" value="ECO:0007669"/>
    <property type="project" value="EnsemblFungi"/>
</dbReference>
<dbReference type="GO" id="GO:0000425">
    <property type="term" value="P:pexophagy"/>
    <property type="evidence" value="ECO:0000318"/>
    <property type="project" value="GO_Central"/>
</dbReference>
<dbReference type="GO" id="GO:0034727">
    <property type="term" value="P:piecemeal microautophagy of the nucleus"/>
    <property type="evidence" value="ECO:0000318"/>
    <property type="project" value="GO_Central"/>
</dbReference>
<dbReference type="GO" id="GO:2000786">
    <property type="term" value="P:positive regulation of autophagosome assembly"/>
    <property type="evidence" value="ECO:0007669"/>
    <property type="project" value="EnsemblFungi"/>
</dbReference>
<dbReference type="GO" id="GO:0034497">
    <property type="term" value="P:protein localization to phagophore assembly site"/>
    <property type="evidence" value="ECO:0007669"/>
    <property type="project" value="EnsemblFungi"/>
</dbReference>
<dbReference type="GO" id="GO:0031503">
    <property type="term" value="P:protein-containing complex localization"/>
    <property type="evidence" value="ECO:0007669"/>
    <property type="project" value="EnsemblFungi"/>
</dbReference>
<dbReference type="GO" id="GO:0061709">
    <property type="term" value="P:reticulophagy"/>
    <property type="evidence" value="ECO:0000318"/>
    <property type="project" value="GO_Central"/>
</dbReference>
<dbReference type="GO" id="GO:0034517">
    <property type="term" value="P:ribophagy"/>
    <property type="evidence" value="ECO:0000318"/>
    <property type="project" value="GO_Central"/>
</dbReference>
<dbReference type="InterPro" id="IPR040040">
    <property type="entry name" value="ATG11"/>
</dbReference>
<dbReference type="InterPro" id="IPR019460">
    <property type="entry name" value="Atg11_C"/>
</dbReference>
<dbReference type="InterPro" id="IPR045326">
    <property type="entry name" value="ATG17-like_dom"/>
</dbReference>
<dbReference type="PANTHER" id="PTHR13222">
    <property type="entry name" value="RB1-INDUCIBLE COILED-COIL"/>
    <property type="match status" value="1"/>
</dbReference>
<dbReference type="PANTHER" id="PTHR13222:SF1">
    <property type="entry name" value="RB1-INDUCIBLE COILED-COIL PROTEIN 1"/>
    <property type="match status" value="1"/>
</dbReference>
<dbReference type="Pfam" id="PF10377">
    <property type="entry name" value="ATG11"/>
    <property type="match status" value="1"/>
</dbReference>
<dbReference type="Pfam" id="PF04108">
    <property type="entry name" value="ATG17_like"/>
    <property type="match status" value="1"/>
</dbReference>
<keyword id="KW-0072">Autophagy</keyword>
<keyword id="KW-0175">Coiled coil</keyword>
<keyword id="KW-0472">Membrane</keyword>
<keyword id="KW-0653">Protein transport</keyword>
<keyword id="KW-1185">Reference proteome</keyword>
<keyword id="KW-0813">Transport</keyword>
<keyword id="KW-0926">Vacuole</keyword>
<proteinExistence type="inferred from homology"/>
<feature type="chain" id="PRO_0000124542" description="Autophagy-related protein 11">
    <location>
        <begin position="1"/>
        <end position="1072"/>
    </location>
</feature>
<feature type="coiled-coil region" evidence="2">
    <location>
        <begin position="615"/>
        <end position="804"/>
    </location>
</feature>
<organism>
    <name type="scientific">Eremothecium gossypii (strain ATCC 10895 / CBS 109.51 / FGSC 9923 / NRRL Y-1056)</name>
    <name type="common">Yeast</name>
    <name type="synonym">Ashbya gossypii</name>
    <dbReference type="NCBI Taxonomy" id="284811"/>
    <lineage>
        <taxon>Eukaryota</taxon>
        <taxon>Fungi</taxon>
        <taxon>Dikarya</taxon>
        <taxon>Ascomycota</taxon>
        <taxon>Saccharomycotina</taxon>
        <taxon>Saccharomycetes</taxon>
        <taxon>Saccharomycetales</taxon>
        <taxon>Saccharomycetaceae</taxon>
        <taxon>Eremothecium</taxon>
    </lineage>
</organism>
<accession>Q75B79</accession>
<gene>
    <name type="primary">ATG11</name>
    <name type="ordered locus">ADL307W</name>
</gene>
<evidence type="ECO:0000250" key="1"/>
<evidence type="ECO:0000255" key="2"/>
<evidence type="ECO:0000305" key="3"/>